<feature type="initiator methionine" description="Removed" evidence="3">
    <location>
        <position position="1"/>
    </location>
</feature>
<feature type="chain" id="PRO_0000190240" description="Pinin">
    <location>
        <begin position="2"/>
        <end position="703"/>
    </location>
</feature>
<feature type="region of interest" description="Disordered" evidence="5">
    <location>
        <begin position="46"/>
        <end position="148"/>
    </location>
</feature>
<feature type="region of interest" description="Sufficient for PSAP complex assembly" evidence="1">
    <location>
        <begin position="223"/>
        <end position="285"/>
    </location>
</feature>
<feature type="region of interest" description="Disordered" evidence="5">
    <location>
        <begin position="284"/>
        <end position="314"/>
    </location>
</feature>
<feature type="region of interest" description="Disordered" evidence="5">
    <location>
        <begin position="331"/>
        <end position="394"/>
    </location>
</feature>
<feature type="region of interest" description="Disordered" evidence="5">
    <location>
        <begin position="408"/>
        <end position="703"/>
    </location>
</feature>
<feature type="coiled-coil region" evidence="4">
    <location>
        <begin position="2"/>
        <end position="32"/>
    </location>
</feature>
<feature type="coiled-coil region" evidence="4">
    <location>
        <begin position="165"/>
        <end position="236"/>
    </location>
</feature>
<feature type="coiled-coil region" evidence="4">
    <location>
        <begin position="354"/>
        <end position="411"/>
    </location>
</feature>
<feature type="compositionally biased region" description="Basic and acidic residues" evidence="5">
    <location>
        <begin position="87"/>
        <end position="100"/>
    </location>
</feature>
<feature type="compositionally biased region" description="Basic and acidic residues" evidence="5">
    <location>
        <begin position="348"/>
        <end position="357"/>
    </location>
</feature>
<feature type="compositionally biased region" description="Basic and acidic residues" evidence="5">
    <location>
        <begin position="366"/>
        <end position="386"/>
    </location>
</feature>
<feature type="compositionally biased region" description="Basic and acidic residues" evidence="5">
    <location>
        <begin position="417"/>
        <end position="433"/>
    </location>
</feature>
<feature type="compositionally biased region" description="Low complexity" evidence="5">
    <location>
        <begin position="479"/>
        <end position="489"/>
    </location>
</feature>
<feature type="compositionally biased region" description="Basic residues" evidence="5">
    <location>
        <begin position="572"/>
        <end position="588"/>
    </location>
</feature>
<feature type="compositionally biased region" description="Low complexity" evidence="5">
    <location>
        <begin position="589"/>
        <end position="642"/>
    </location>
</feature>
<feature type="compositionally biased region" description="Basic residues" evidence="5">
    <location>
        <begin position="646"/>
        <end position="664"/>
    </location>
</feature>
<feature type="compositionally biased region" description="Basic and acidic residues" evidence="5">
    <location>
        <begin position="665"/>
        <end position="676"/>
    </location>
</feature>
<feature type="modified residue" description="N-acetylalanine" evidence="3">
    <location>
        <position position="2"/>
    </location>
</feature>
<feature type="modified residue" description="Phosphoserine" evidence="3">
    <location>
        <position position="48"/>
    </location>
</feature>
<feature type="modified residue" description="Omega-N-methylarginine" evidence="2">
    <location>
        <position position="54"/>
    </location>
</feature>
<feature type="modified residue" description="Phosphoserine" evidence="3">
    <location>
        <position position="58"/>
    </location>
</feature>
<feature type="modified residue" description="Phosphoserine" evidence="3">
    <location>
        <position position="66"/>
    </location>
</feature>
<feature type="modified residue" description="Phosphoserine" evidence="3">
    <location>
        <position position="96"/>
    </location>
</feature>
<feature type="modified residue" description="Phosphoserine" evidence="3">
    <location>
        <position position="100"/>
    </location>
</feature>
<feature type="modified residue" description="Phosphoserine" evidence="3">
    <location>
        <position position="114"/>
    </location>
</feature>
<feature type="modified residue" description="Phosphoserine" evidence="3">
    <location>
        <position position="115"/>
    </location>
</feature>
<feature type="modified residue" description="Phosphothreonine" evidence="3">
    <location>
        <position position="125"/>
    </location>
</feature>
<feature type="modified residue" description="N6-acetyllysine; alternate" evidence="3">
    <location>
        <position position="240"/>
    </location>
</feature>
<feature type="modified residue" description="N6-succinyllysine; alternate" evidence="2">
    <location>
        <position position="240"/>
    </location>
</feature>
<feature type="modified residue" description="Phosphoserine" evidence="3">
    <location>
        <position position="354"/>
    </location>
</feature>
<feature type="modified residue" description="Phosphoserine" evidence="3">
    <location>
        <position position="382"/>
    </location>
</feature>
<feature type="modified residue" description="Phosphoserine" evidence="3">
    <location>
        <position position="388"/>
    </location>
</feature>
<feature type="modified residue" description="Phosphoserine" evidence="2">
    <location>
        <position position="450"/>
    </location>
</feature>
<feature type="modified residue" description="Phosphoserine" evidence="3">
    <location>
        <position position="457"/>
    </location>
</feature>
<feature type="modified residue" description="Phosphoserine" evidence="3">
    <location>
        <position position="565"/>
    </location>
</feature>
<feature type="modified residue" description="Phosphoserine" evidence="3">
    <location>
        <position position="670"/>
    </location>
</feature>
<feature type="modified residue" description="Phosphoserine" evidence="3">
    <location>
        <position position="691"/>
    </location>
</feature>
<feature type="cross-link" description="Glycyl lysine isopeptide (Lys-Gly) (interchain with G-Cter in SUMO2)" evidence="3">
    <location>
        <position position="109"/>
    </location>
</feature>
<feature type="cross-link" description="Glycyl lysine isopeptide (Lys-Gly) (interchain with G-Cter in SUMO2)" evidence="3">
    <location>
        <position position="121"/>
    </location>
</feature>
<feature type="cross-link" description="Glycyl lysine isopeptide (Lys-Gly) (interchain with G-Cter in SUMO2)" evidence="3">
    <location>
        <position position="138"/>
    </location>
</feature>
<feature type="cross-link" description="Glycyl lysine isopeptide (Lys-Gly) (interchain with G-Cter in SUMO2)" evidence="3">
    <location>
        <position position="157"/>
    </location>
</feature>
<feature type="cross-link" description="Glycyl lysine isopeptide (Lys-Gly) (interchain with G-Cter in SUMO1); alternate" evidence="3">
    <location>
        <position position="159"/>
    </location>
</feature>
<feature type="cross-link" description="Glycyl lysine isopeptide (Lys-Gly) (interchain with G-Cter in SUMO2); alternate" evidence="3">
    <location>
        <position position="159"/>
    </location>
</feature>
<feature type="cross-link" description="Glycyl lysine isopeptide (Lys-Gly) (interchain with G-Cter in SUMO2)" evidence="3">
    <location>
        <position position="230"/>
    </location>
</feature>
<feature type="cross-link" description="Glycyl lysine isopeptide (Lys-Gly) (interchain with G-Cter in SUMO2)" evidence="3">
    <location>
        <position position="281"/>
    </location>
</feature>
<feature type="cross-link" description="Glycyl lysine isopeptide (Lys-Gly) (interchain with G-Cter in SUMO2)" evidence="3">
    <location>
        <position position="306"/>
    </location>
</feature>
<feature type="cross-link" description="Glycyl lysine isopeptide (Lys-Gly) (interchain with G-Cter in SUMO2)" evidence="3">
    <location>
        <position position="313"/>
    </location>
</feature>
<feature type="cross-link" description="Glycyl lysine isopeptide (Lys-Gly) (interchain with G-Cter in SUMO2)" evidence="3">
    <location>
        <position position="366"/>
    </location>
</feature>
<feature type="cross-link" description="Glycyl lysine isopeptide (Lys-Gly) (interchain with G-Cter in SUMO2)" evidence="3">
    <location>
        <position position="372"/>
    </location>
</feature>
<feature type="cross-link" description="Glycyl lysine isopeptide (Lys-Gly) (interchain with G-Cter in SUMO2)" evidence="3">
    <location>
        <position position="541"/>
    </location>
</feature>
<feature type="cross-link" description="Glycyl lysine isopeptide (Lys-Gly) (interchain with G-Cter in SUMO2)" evidence="3">
    <location>
        <position position="549"/>
    </location>
</feature>
<feature type="cross-link" description="Glycyl lysine isopeptide (Lys-Gly) (interchain with G-Cter in SUMO2)" evidence="3">
    <location>
        <position position="566"/>
    </location>
</feature>
<organism>
    <name type="scientific">Bos taurus</name>
    <name type="common">Bovine</name>
    <dbReference type="NCBI Taxonomy" id="9913"/>
    <lineage>
        <taxon>Eukaryota</taxon>
        <taxon>Metazoa</taxon>
        <taxon>Chordata</taxon>
        <taxon>Craniata</taxon>
        <taxon>Vertebrata</taxon>
        <taxon>Euteleostomi</taxon>
        <taxon>Mammalia</taxon>
        <taxon>Eutheria</taxon>
        <taxon>Laurasiatheria</taxon>
        <taxon>Artiodactyla</taxon>
        <taxon>Ruminantia</taxon>
        <taxon>Pecora</taxon>
        <taxon>Bovidae</taxon>
        <taxon>Bovinae</taxon>
        <taxon>Bos</taxon>
    </lineage>
</organism>
<keyword id="KW-0007">Acetylation</keyword>
<keyword id="KW-0010">Activator</keyword>
<keyword id="KW-0965">Cell junction</keyword>
<keyword id="KW-0175">Coiled coil</keyword>
<keyword id="KW-0238">DNA-binding</keyword>
<keyword id="KW-1017">Isopeptide bond</keyword>
<keyword id="KW-0488">Methylation</keyword>
<keyword id="KW-0507">mRNA processing</keyword>
<keyword id="KW-0508">mRNA splicing</keyword>
<keyword id="KW-0539">Nucleus</keyword>
<keyword id="KW-0597">Phosphoprotein</keyword>
<keyword id="KW-1185">Reference proteome</keyword>
<keyword id="KW-0747">Spliceosome</keyword>
<keyword id="KW-0804">Transcription</keyword>
<keyword id="KW-0805">Transcription regulation</keyword>
<keyword id="KW-0832">Ubl conjugation</keyword>
<gene>
    <name type="primary">PNN</name>
</gene>
<dbReference type="EMBL" id="U77717">
    <property type="protein sequence ID" value="AAB48302.1"/>
    <property type="molecule type" value="mRNA"/>
</dbReference>
<dbReference type="SMR" id="P79122"/>
<dbReference type="STRING" id="9913.ENSBTAP00000038454"/>
<dbReference type="InParanoid" id="P79122"/>
<dbReference type="Proteomes" id="UP000009136">
    <property type="component" value="Unplaced"/>
</dbReference>
<dbReference type="GO" id="GO:0071013">
    <property type="term" value="C:catalytic step 2 spliceosome"/>
    <property type="evidence" value="ECO:0000318"/>
    <property type="project" value="GO_Central"/>
</dbReference>
<dbReference type="GO" id="GO:0030057">
    <property type="term" value="C:desmosome"/>
    <property type="evidence" value="ECO:0007669"/>
    <property type="project" value="UniProtKB-SubCell"/>
</dbReference>
<dbReference type="GO" id="GO:0016607">
    <property type="term" value="C:nuclear speck"/>
    <property type="evidence" value="ECO:0007669"/>
    <property type="project" value="UniProtKB-SubCell"/>
</dbReference>
<dbReference type="GO" id="GO:0003677">
    <property type="term" value="F:DNA binding"/>
    <property type="evidence" value="ECO:0007669"/>
    <property type="project" value="UniProtKB-KW"/>
</dbReference>
<dbReference type="GO" id="GO:0006397">
    <property type="term" value="P:mRNA processing"/>
    <property type="evidence" value="ECO:0007669"/>
    <property type="project" value="UniProtKB-KW"/>
</dbReference>
<dbReference type="GO" id="GO:0008380">
    <property type="term" value="P:RNA splicing"/>
    <property type="evidence" value="ECO:0007669"/>
    <property type="project" value="UniProtKB-KW"/>
</dbReference>
<dbReference type="InterPro" id="IPR039853">
    <property type="entry name" value="Pinin"/>
</dbReference>
<dbReference type="InterPro" id="IPR006786">
    <property type="entry name" value="Pinin_SDK_MemA"/>
</dbReference>
<dbReference type="InterPro" id="IPR006787">
    <property type="entry name" value="Pinin_SDK_N"/>
</dbReference>
<dbReference type="PANTHER" id="PTHR12707:SF0">
    <property type="entry name" value="PININ"/>
    <property type="match status" value="1"/>
</dbReference>
<dbReference type="PANTHER" id="PTHR12707">
    <property type="entry name" value="PINN"/>
    <property type="match status" value="1"/>
</dbReference>
<dbReference type="Pfam" id="PF04696">
    <property type="entry name" value="Pinin_SDK_memA"/>
    <property type="match status" value="1"/>
</dbReference>
<dbReference type="Pfam" id="PF04697">
    <property type="entry name" value="Pinin_SDK_N"/>
    <property type="match status" value="1"/>
</dbReference>
<name>PININ_BOVIN</name>
<proteinExistence type="evidence at transcript level"/>
<protein>
    <recommendedName>
        <fullName>Pinin</fullName>
    </recommendedName>
</protein>
<evidence type="ECO:0000250" key="1"/>
<evidence type="ECO:0000250" key="2">
    <source>
        <dbReference type="UniProtKB" id="O35691"/>
    </source>
</evidence>
<evidence type="ECO:0000250" key="3">
    <source>
        <dbReference type="UniProtKB" id="Q9H307"/>
    </source>
</evidence>
<evidence type="ECO:0000255" key="4"/>
<evidence type="ECO:0000256" key="5">
    <source>
        <dbReference type="SAM" id="MobiDB-lite"/>
    </source>
</evidence>
<evidence type="ECO:0000305" key="6"/>
<accession>P79122</accession>
<reference key="1">
    <citation type="journal article" date="1996" name="J. Cell Biol.">
        <title>Characterization of pinin, a novel protein associated with the desmosome-intermediate filament complex.</title>
        <authorList>
            <person name="Ouyang P."/>
            <person name="Sugrue S.P."/>
        </authorList>
    </citation>
    <scope>NUCLEOTIDE SEQUENCE [MRNA]</scope>
    <source>
        <tissue>Kidney</tissue>
    </source>
</reference>
<comment type="function">
    <text evidence="1">Transcriptional activator binding to the E-box 1 core sequence of the E-cadherin promoter gene; the core-binding sequence is 5'CAGGTG-3'. Capable of reversing CTBP1-mediated transcription repression. Auxiliary component of the splicing-dependent multiprotein exon junction complex (EJC) deposited at splice junction on mRNAs. The EJC is a dynamic structure consisting of core proteins and several peripheral nuclear and cytoplasmic associated factors that join the complex only transiently either during EJC assembly or during subsequent mRNA metabolism. Participates in the regulation of alternative pre-mRNA splicing. Associates to spliced mRNA within 60 nt upstream of the 5'-splice sites. Component of the PSAP complex which binds RNA in a sequence-independent manner and is proposed to be recruited to the EJC prior to or during the splicing process and to regulate specific excision of introns in specific transcription subsets. Involved in the establishment and maintenance of epithelia cell-cell adhesion (By similarity).</text>
</comment>
<comment type="subunit">
    <text evidence="1">Found in a mRNA splicing-dependent exon junction complex (EJC). Found in a complex with SR proteins. Found in a mRNP complex with RNPS1. Component of the PSAP complex consisting of RNPS1, SAP18 and PNN. Interacts with PNISR, CTBP1, CTBP2, KRT8, KRT18, KRT19, PS1D/PNO40, PPIG, RNPS1, SFRS4 and SRRM2. Identified in the spliceosome C complex (By similarity).</text>
</comment>
<comment type="subcellular location">
    <subcellularLocation>
        <location evidence="1">Nucleus speckle</location>
    </subcellularLocation>
    <subcellularLocation>
        <location evidence="1">Cell junction</location>
        <location evidence="1">Desmosome</location>
    </subcellularLocation>
    <text evidence="1">Cell-cell contact area, predominantly desmosome of intercellular adherens junction. Not a nucleocytoplasmic shuttling protein (By similarity).</text>
</comment>
<comment type="similarity">
    <text evidence="6">Belongs to the pinin family.</text>
</comment>
<sequence>MAVAVRTLQEQLEKAKESLKNVDENIRKLTGRDPNDVRPIQARLLALSGPGGGRGRGSLLLRRGFSDSGGGPPAKQRDLEGAVSRLGGERRTRRESRQESDPEDDDVKKPALQSSVVATSKERSTERPLFQDQNTDEKETPERPGPIFGLLMGTLQKFKQESTVATERQKRRQEIEQKLEVQAEEERKQVENERRELFEERRAKQTELRLLEQKVELAQLQEEWNEHNAKIIKYIRTKTKPHLFYIPGRMCPAPKLIEESQRKTNALFEGRRIEFAEQINKMEARPRRQSMKEKEHQVVVRNEEQKSEQEEGKVAPRTRVMLRALDDLVARVGTPSPRRGSGEEEEKEIPIVHSDAEKEQEEEEQKQEMEVKMEEETEVRESEKQQDSQPEEVMDVLEMVESVKNVIAEQEVMETNQVERVEPSENEASKELEPEMEFEIEPDKECKSLSPGKENASTLEMENEPEEKEEKESEPQPEPMAQPQAQSLPQPQPQRHRQSQSQPQQYSSPPPLSQPETLPLAVSQPPPQLIQRQGHLPPERKEFLVESVKLTEVPTEPVLTVHSESKYETKTRSRSRGRARNRTSKSRSRSSSSSSSSSSSTSSSSGSSSSSGSSSSRTSSSSSSTSGSSSRDSSSSTTSSSESRSRSRGRGHNRDRKHRRSVDRKRRDASGLERSHKSAKGGSSRDAKAVSSSGMPRFKPGQL</sequence>